<proteinExistence type="inferred from homology"/>
<sequence>MAIVIVAFVVFLDQFTKYLAAKYLMPIGSYPVIKHFFHLTYVENRGAAFGMLQNKTLFFIVITVVVGIVLIYSMIKLPENSLYNYTLAMILGGAIGNLIDRVRLGYVVDFIDFKFFPAVFNVADSFIVVGAIILGYLMIFKGGIR</sequence>
<organism>
    <name type="scientific">Caldanaerobacter subterraneus subsp. tengcongensis (strain DSM 15242 / JCM 11007 / NBRC 100824 / MB4)</name>
    <name type="common">Thermoanaerobacter tengcongensis</name>
    <dbReference type="NCBI Taxonomy" id="273068"/>
    <lineage>
        <taxon>Bacteria</taxon>
        <taxon>Bacillati</taxon>
        <taxon>Bacillota</taxon>
        <taxon>Clostridia</taxon>
        <taxon>Thermoanaerobacterales</taxon>
        <taxon>Thermoanaerobacteraceae</taxon>
        <taxon>Caldanaerobacter</taxon>
    </lineage>
</organism>
<dbReference type="EC" id="3.4.23.36" evidence="1"/>
<dbReference type="EMBL" id="AE008691">
    <property type="protein sequence ID" value="AAM24750.1"/>
    <property type="molecule type" value="Genomic_DNA"/>
</dbReference>
<dbReference type="RefSeq" id="WP_011025787.1">
    <property type="nucleotide sequence ID" value="NC_003869.1"/>
</dbReference>
<dbReference type="SMR" id="Q8R9R0"/>
<dbReference type="STRING" id="273068.TTE1539"/>
<dbReference type="KEGG" id="tte:TTE1539"/>
<dbReference type="eggNOG" id="COG0597">
    <property type="taxonomic scope" value="Bacteria"/>
</dbReference>
<dbReference type="HOGENOM" id="CLU_083252_3_4_9"/>
<dbReference type="OrthoDB" id="9810259at2"/>
<dbReference type="UniPathway" id="UPA00665"/>
<dbReference type="Proteomes" id="UP000000555">
    <property type="component" value="Chromosome"/>
</dbReference>
<dbReference type="GO" id="GO:0005886">
    <property type="term" value="C:plasma membrane"/>
    <property type="evidence" value="ECO:0007669"/>
    <property type="project" value="UniProtKB-SubCell"/>
</dbReference>
<dbReference type="GO" id="GO:0004190">
    <property type="term" value="F:aspartic-type endopeptidase activity"/>
    <property type="evidence" value="ECO:0007669"/>
    <property type="project" value="UniProtKB-UniRule"/>
</dbReference>
<dbReference type="GO" id="GO:0006508">
    <property type="term" value="P:proteolysis"/>
    <property type="evidence" value="ECO:0007669"/>
    <property type="project" value="UniProtKB-KW"/>
</dbReference>
<dbReference type="HAMAP" id="MF_00161">
    <property type="entry name" value="LspA"/>
    <property type="match status" value="1"/>
</dbReference>
<dbReference type="InterPro" id="IPR001872">
    <property type="entry name" value="Peptidase_A8"/>
</dbReference>
<dbReference type="NCBIfam" id="TIGR00077">
    <property type="entry name" value="lspA"/>
    <property type="match status" value="1"/>
</dbReference>
<dbReference type="PANTHER" id="PTHR33695">
    <property type="entry name" value="LIPOPROTEIN SIGNAL PEPTIDASE"/>
    <property type="match status" value="1"/>
</dbReference>
<dbReference type="PANTHER" id="PTHR33695:SF1">
    <property type="entry name" value="LIPOPROTEIN SIGNAL PEPTIDASE"/>
    <property type="match status" value="1"/>
</dbReference>
<dbReference type="Pfam" id="PF01252">
    <property type="entry name" value="Peptidase_A8"/>
    <property type="match status" value="1"/>
</dbReference>
<dbReference type="PRINTS" id="PR00781">
    <property type="entry name" value="LIPOSIGPTASE"/>
</dbReference>
<dbReference type="PROSITE" id="PS00855">
    <property type="entry name" value="SPASE_II"/>
    <property type="match status" value="1"/>
</dbReference>
<comment type="function">
    <text evidence="1">This protein specifically catalyzes the removal of signal peptides from prolipoproteins.</text>
</comment>
<comment type="catalytic activity">
    <reaction evidence="1">
        <text>Release of signal peptides from bacterial membrane prolipoproteins. Hydrolyzes -Xaa-Yaa-Zaa-|-(S,diacylglyceryl)Cys-, in which Xaa is hydrophobic (preferably Leu), and Yaa (Ala or Ser) and Zaa (Gly or Ala) have small, neutral side chains.</text>
        <dbReference type="EC" id="3.4.23.36"/>
    </reaction>
</comment>
<comment type="pathway">
    <text evidence="1">Protein modification; lipoprotein biosynthesis (signal peptide cleavage).</text>
</comment>
<comment type="subcellular location">
    <subcellularLocation>
        <location evidence="1">Cell membrane</location>
        <topology evidence="1">Multi-pass membrane protein</topology>
    </subcellularLocation>
</comment>
<comment type="similarity">
    <text evidence="1">Belongs to the peptidase A8 family.</text>
</comment>
<gene>
    <name evidence="1" type="primary">lspA</name>
    <name type="ordered locus">TTE1539</name>
</gene>
<reference key="1">
    <citation type="journal article" date="2002" name="Genome Res.">
        <title>A complete sequence of the T. tengcongensis genome.</title>
        <authorList>
            <person name="Bao Q."/>
            <person name="Tian Y."/>
            <person name="Li W."/>
            <person name="Xu Z."/>
            <person name="Xuan Z."/>
            <person name="Hu S."/>
            <person name="Dong W."/>
            <person name="Yang J."/>
            <person name="Chen Y."/>
            <person name="Xue Y."/>
            <person name="Xu Y."/>
            <person name="Lai X."/>
            <person name="Huang L."/>
            <person name="Dong X."/>
            <person name="Ma Y."/>
            <person name="Ling L."/>
            <person name="Tan H."/>
            <person name="Chen R."/>
            <person name="Wang J."/>
            <person name="Yu J."/>
            <person name="Yang H."/>
        </authorList>
    </citation>
    <scope>NUCLEOTIDE SEQUENCE [LARGE SCALE GENOMIC DNA]</scope>
    <source>
        <strain>DSM 15242 / JCM 11007 / NBRC 100824 / MB4</strain>
    </source>
</reference>
<feature type="chain" id="PRO_0000178828" description="Lipoprotein signal peptidase">
    <location>
        <begin position="1"/>
        <end position="145"/>
    </location>
</feature>
<feature type="transmembrane region" description="Helical" evidence="1">
    <location>
        <begin position="57"/>
        <end position="77"/>
    </location>
</feature>
<feature type="transmembrane region" description="Helical" evidence="1">
    <location>
        <begin position="79"/>
        <end position="99"/>
    </location>
</feature>
<feature type="transmembrane region" description="Helical" evidence="1">
    <location>
        <begin position="120"/>
        <end position="140"/>
    </location>
</feature>
<feature type="active site" evidence="1">
    <location>
        <position position="109"/>
    </location>
</feature>
<feature type="active site" evidence="1">
    <location>
        <position position="124"/>
    </location>
</feature>
<name>LSPA_CALS4</name>
<protein>
    <recommendedName>
        <fullName evidence="1">Lipoprotein signal peptidase</fullName>
        <ecNumber evidence="1">3.4.23.36</ecNumber>
    </recommendedName>
    <alternativeName>
        <fullName evidence="1">Prolipoprotein signal peptidase</fullName>
    </alternativeName>
    <alternativeName>
        <fullName evidence="1">Signal peptidase II</fullName>
        <shortName evidence="1">SPase II</shortName>
    </alternativeName>
</protein>
<evidence type="ECO:0000255" key="1">
    <source>
        <dbReference type="HAMAP-Rule" id="MF_00161"/>
    </source>
</evidence>
<accession>Q8R9R0</accession>
<keyword id="KW-0064">Aspartyl protease</keyword>
<keyword id="KW-1003">Cell membrane</keyword>
<keyword id="KW-0378">Hydrolase</keyword>
<keyword id="KW-0472">Membrane</keyword>
<keyword id="KW-0645">Protease</keyword>
<keyword id="KW-1185">Reference proteome</keyword>
<keyword id="KW-0812">Transmembrane</keyword>
<keyword id="KW-1133">Transmembrane helix</keyword>